<organism>
    <name type="scientific">Mus musculus</name>
    <name type="common">Mouse</name>
    <dbReference type="NCBI Taxonomy" id="10090"/>
    <lineage>
        <taxon>Eukaryota</taxon>
        <taxon>Metazoa</taxon>
        <taxon>Chordata</taxon>
        <taxon>Craniata</taxon>
        <taxon>Vertebrata</taxon>
        <taxon>Euteleostomi</taxon>
        <taxon>Mammalia</taxon>
        <taxon>Eutheria</taxon>
        <taxon>Euarchontoglires</taxon>
        <taxon>Glires</taxon>
        <taxon>Rodentia</taxon>
        <taxon>Myomorpha</taxon>
        <taxon>Muroidea</taxon>
        <taxon>Muridae</taxon>
        <taxon>Murinae</taxon>
        <taxon>Mus</taxon>
        <taxon>Mus</taxon>
    </lineage>
</organism>
<name>1A1L2_MOUSE</name>
<sequence>MSENRNEGSSQAAKANSDTQTPSHFKVTHPRLRDQLKKKSSKKKGFKFVQEKMLKFQHVIRNQFLQQISQQMQCVPPGDQQCTQTSRKRKKMGYLLSQMVNFLWSNTVKKLKFKVPLPCLDSRCGIKVGHQTLSPWQTGQSRPSLGGFEAALASCTLSKRGAGIYESYHLSFQSYEAYQADKYHKDKNPSGYINLSTSENKLCLDLITARLTQSDMNLLDEAQLQYSDWKGQPFLREELASFLTHYCKAPTPLDPENVVVLNGCSSVFASLAMVLCDPGDALLIPTPCYNGFVFSSHLYSKIELIPVHLESQVPRSNLDSFQLTVDKLKLALTQAKKKAKKVKGLVLINPQNPLGDVYTQSSLQEYLVFAKTHKLHVIMDEIYMLSVFEPSVTFHSVLSIKDLPDPNMTHMIWGTSKDFGMSGIRFGVLYTHNKEVASAMKAFGYHHGVSGITQYKLCRLLQDKEWISKVYLPKNHSRLQKAYSYITKILKDLKIPFYNGGSGLFVWINLKAYLSPCTFDQEQILHQRFRDKKLLLSSGKSYMCIEPGWFRLVFAETHLHLQVAMDRFCHVLAEHKKHEK</sequence>
<accession>Q3UX83</accession>
<accession>Q3TQ30</accession>
<comment type="alternative products">
    <event type="alternative splicing"/>
    <isoform>
        <id>Q3UX83-1</id>
        <name>1</name>
        <sequence type="displayed"/>
    </isoform>
    <isoform>
        <id>Q3UX83-2</id>
        <name>2</name>
        <sequence type="described" ref="VSP_033860"/>
    </isoform>
</comment>
<comment type="similarity">
    <text evidence="4">Belongs to the class-I pyridoxal-phosphate-dependent aminotransferase family.</text>
</comment>
<comment type="caution">
    <text evidence="4">While belonging to the class-I pyridoxal-phosphate-dependent aminotransferase family, it lacks a number of residues which are necessary for activity thus suggesting that it lacks enzymatic activity.</text>
</comment>
<gene>
    <name type="primary">Accsl</name>
    <name type="synonym">Gm1967</name>
</gene>
<protein>
    <recommendedName>
        <fullName>Probable inactive 1-aminocyclopropane-1-carboxylate synthase-like protein 2</fullName>
        <shortName>ACC synthase-like protein 2</shortName>
    </recommendedName>
</protein>
<evidence type="ECO:0000250" key="1"/>
<evidence type="ECO:0000256" key="2">
    <source>
        <dbReference type="SAM" id="MobiDB-lite"/>
    </source>
</evidence>
<evidence type="ECO:0000303" key="3">
    <source>
    </source>
</evidence>
<evidence type="ECO:0000305" key="4"/>
<reference key="1">
    <citation type="journal article" date="2005" name="Science">
        <title>The transcriptional landscape of the mammalian genome.</title>
        <authorList>
            <person name="Carninci P."/>
            <person name="Kasukawa T."/>
            <person name="Katayama S."/>
            <person name="Gough J."/>
            <person name="Frith M.C."/>
            <person name="Maeda N."/>
            <person name="Oyama R."/>
            <person name="Ravasi T."/>
            <person name="Lenhard B."/>
            <person name="Wells C."/>
            <person name="Kodzius R."/>
            <person name="Shimokawa K."/>
            <person name="Bajic V.B."/>
            <person name="Brenner S.E."/>
            <person name="Batalov S."/>
            <person name="Forrest A.R."/>
            <person name="Zavolan M."/>
            <person name="Davis M.J."/>
            <person name="Wilming L.G."/>
            <person name="Aidinis V."/>
            <person name="Allen J.E."/>
            <person name="Ambesi-Impiombato A."/>
            <person name="Apweiler R."/>
            <person name="Aturaliya R.N."/>
            <person name="Bailey T.L."/>
            <person name="Bansal M."/>
            <person name="Baxter L."/>
            <person name="Beisel K.W."/>
            <person name="Bersano T."/>
            <person name="Bono H."/>
            <person name="Chalk A.M."/>
            <person name="Chiu K.P."/>
            <person name="Choudhary V."/>
            <person name="Christoffels A."/>
            <person name="Clutterbuck D.R."/>
            <person name="Crowe M.L."/>
            <person name="Dalla E."/>
            <person name="Dalrymple B.P."/>
            <person name="de Bono B."/>
            <person name="Della Gatta G."/>
            <person name="di Bernardo D."/>
            <person name="Down T."/>
            <person name="Engstrom P."/>
            <person name="Fagiolini M."/>
            <person name="Faulkner G."/>
            <person name="Fletcher C.F."/>
            <person name="Fukushima T."/>
            <person name="Furuno M."/>
            <person name="Futaki S."/>
            <person name="Gariboldi M."/>
            <person name="Georgii-Hemming P."/>
            <person name="Gingeras T.R."/>
            <person name="Gojobori T."/>
            <person name="Green R.E."/>
            <person name="Gustincich S."/>
            <person name="Harbers M."/>
            <person name="Hayashi Y."/>
            <person name="Hensch T.K."/>
            <person name="Hirokawa N."/>
            <person name="Hill D."/>
            <person name="Huminiecki L."/>
            <person name="Iacono M."/>
            <person name="Ikeo K."/>
            <person name="Iwama A."/>
            <person name="Ishikawa T."/>
            <person name="Jakt M."/>
            <person name="Kanapin A."/>
            <person name="Katoh M."/>
            <person name="Kawasawa Y."/>
            <person name="Kelso J."/>
            <person name="Kitamura H."/>
            <person name="Kitano H."/>
            <person name="Kollias G."/>
            <person name="Krishnan S.P."/>
            <person name="Kruger A."/>
            <person name="Kummerfeld S.K."/>
            <person name="Kurochkin I.V."/>
            <person name="Lareau L.F."/>
            <person name="Lazarevic D."/>
            <person name="Lipovich L."/>
            <person name="Liu J."/>
            <person name="Liuni S."/>
            <person name="McWilliam S."/>
            <person name="Madan Babu M."/>
            <person name="Madera M."/>
            <person name="Marchionni L."/>
            <person name="Matsuda H."/>
            <person name="Matsuzawa S."/>
            <person name="Miki H."/>
            <person name="Mignone F."/>
            <person name="Miyake S."/>
            <person name="Morris K."/>
            <person name="Mottagui-Tabar S."/>
            <person name="Mulder N."/>
            <person name="Nakano N."/>
            <person name="Nakauchi H."/>
            <person name="Ng P."/>
            <person name="Nilsson R."/>
            <person name="Nishiguchi S."/>
            <person name="Nishikawa S."/>
            <person name="Nori F."/>
            <person name="Ohara O."/>
            <person name="Okazaki Y."/>
            <person name="Orlando V."/>
            <person name="Pang K.C."/>
            <person name="Pavan W.J."/>
            <person name="Pavesi G."/>
            <person name="Pesole G."/>
            <person name="Petrovsky N."/>
            <person name="Piazza S."/>
            <person name="Reed J."/>
            <person name="Reid J.F."/>
            <person name="Ring B.Z."/>
            <person name="Ringwald M."/>
            <person name="Rost B."/>
            <person name="Ruan Y."/>
            <person name="Salzberg S.L."/>
            <person name="Sandelin A."/>
            <person name="Schneider C."/>
            <person name="Schoenbach C."/>
            <person name="Sekiguchi K."/>
            <person name="Semple C.A."/>
            <person name="Seno S."/>
            <person name="Sessa L."/>
            <person name="Sheng Y."/>
            <person name="Shibata Y."/>
            <person name="Shimada H."/>
            <person name="Shimada K."/>
            <person name="Silva D."/>
            <person name="Sinclair B."/>
            <person name="Sperling S."/>
            <person name="Stupka E."/>
            <person name="Sugiura K."/>
            <person name="Sultana R."/>
            <person name="Takenaka Y."/>
            <person name="Taki K."/>
            <person name="Tammoja K."/>
            <person name="Tan S.L."/>
            <person name="Tang S."/>
            <person name="Taylor M.S."/>
            <person name="Tegner J."/>
            <person name="Teichmann S.A."/>
            <person name="Ueda H.R."/>
            <person name="van Nimwegen E."/>
            <person name="Verardo R."/>
            <person name="Wei C.L."/>
            <person name="Yagi K."/>
            <person name="Yamanishi H."/>
            <person name="Zabarovsky E."/>
            <person name="Zhu S."/>
            <person name="Zimmer A."/>
            <person name="Hide W."/>
            <person name="Bult C."/>
            <person name="Grimmond S.M."/>
            <person name="Teasdale R.D."/>
            <person name="Liu E.T."/>
            <person name="Brusic V."/>
            <person name="Quackenbush J."/>
            <person name="Wahlestedt C."/>
            <person name="Mattick J.S."/>
            <person name="Hume D.A."/>
            <person name="Kai C."/>
            <person name="Sasaki D."/>
            <person name="Tomaru Y."/>
            <person name="Fukuda S."/>
            <person name="Kanamori-Katayama M."/>
            <person name="Suzuki M."/>
            <person name="Aoki J."/>
            <person name="Arakawa T."/>
            <person name="Iida J."/>
            <person name="Imamura K."/>
            <person name="Itoh M."/>
            <person name="Kato T."/>
            <person name="Kawaji H."/>
            <person name="Kawagashira N."/>
            <person name="Kawashima T."/>
            <person name="Kojima M."/>
            <person name="Kondo S."/>
            <person name="Konno H."/>
            <person name="Nakano K."/>
            <person name="Ninomiya N."/>
            <person name="Nishio T."/>
            <person name="Okada M."/>
            <person name="Plessy C."/>
            <person name="Shibata K."/>
            <person name="Shiraki T."/>
            <person name="Suzuki S."/>
            <person name="Tagami M."/>
            <person name="Waki K."/>
            <person name="Watahiki A."/>
            <person name="Okamura-Oho Y."/>
            <person name="Suzuki H."/>
            <person name="Kawai J."/>
            <person name="Hayashizaki Y."/>
        </authorList>
    </citation>
    <scope>NUCLEOTIDE SEQUENCE [LARGE SCALE MRNA] (ISOFORMS 1 AND 2)</scope>
    <source>
        <strain>C57BL/6J</strain>
    </source>
</reference>
<reference key="2">
    <citation type="journal article" date="2009" name="PLoS Biol.">
        <title>Lineage-specific biology revealed by a finished genome assembly of the mouse.</title>
        <authorList>
            <person name="Church D.M."/>
            <person name="Goodstadt L."/>
            <person name="Hillier L.W."/>
            <person name="Zody M.C."/>
            <person name="Goldstein S."/>
            <person name="She X."/>
            <person name="Bult C.J."/>
            <person name="Agarwala R."/>
            <person name="Cherry J.L."/>
            <person name="DiCuccio M."/>
            <person name="Hlavina W."/>
            <person name="Kapustin Y."/>
            <person name="Meric P."/>
            <person name="Maglott D."/>
            <person name="Birtle Z."/>
            <person name="Marques A.C."/>
            <person name="Graves T."/>
            <person name="Zhou S."/>
            <person name="Teague B."/>
            <person name="Potamousis K."/>
            <person name="Churas C."/>
            <person name="Place M."/>
            <person name="Herschleb J."/>
            <person name="Runnheim R."/>
            <person name="Forrest D."/>
            <person name="Amos-Landgraf J."/>
            <person name="Schwartz D.C."/>
            <person name="Cheng Z."/>
            <person name="Lindblad-Toh K."/>
            <person name="Eichler E.E."/>
            <person name="Ponting C.P."/>
        </authorList>
    </citation>
    <scope>NUCLEOTIDE SEQUENCE [LARGE SCALE GENOMIC DNA]</scope>
    <source>
        <strain>C57BL/6J</strain>
    </source>
</reference>
<dbReference type="EMBL" id="AK135828">
    <property type="protein sequence ID" value="BAE22680.1"/>
    <property type="molecule type" value="mRNA"/>
</dbReference>
<dbReference type="EMBL" id="AK163963">
    <property type="protein sequence ID" value="BAE37555.1"/>
    <property type="molecule type" value="mRNA"/>
</dbReference>
<dbReference type="EMBL" id="AL732472">
    <property type="status" value="NOT_ANNOTATED_CDS"/>
    <property type="molecule type" value="Genomic_DNA"/>
</dbReference>
<dbReference type="CCDS" id="CCDS38183.1">
    <molecule id="Q3UX83-1"/>
</dbReference>
<dbReference type="RefSeq" id="NP_001028624.2">
    <molecule id="Q3UX83-1"/>
    <property type="nucleotide sequence ID" value="NM_001033452.4"/>
</dbReference>
<dbReference type="RefSeq" id="NP_001350021.1">
    <molecule id="Q3UX83-2"/>
    <property type="nucleotide sequence ID" value="NM_001363092.1"/>
</dbReference>
<dbReference type="RefSeq" id="XP_011237948.1">
    <property type="nucleotide sequence ID" value="XM_011239646.1"/>
</dbReference>
<dbReference type="SMR" id="Q3UX83"/>
<dbReference type="BioGRID" id="237929">
    <property type="interactions" value="1"/>
</dbReference>
<dbReference type="FunCoup" id="Q3UX83">
    <property type="interactions" value="11"/>
</dbReference>
<dbReference type="STRING" id="10090.ENSMUSP00000097281"/>
<dbReference type="PhosphoSitePlus" id="Q3UX83"/>
<dbReference type="PaxDb" id="10090-ENSMUSP00000097281"/>
<dbReference type="Antibodypedia" id="26088">
    <property type="antibodies" value="45 antibodies from 16 providers"/>
</dbReference>
<dbReference type="Ensembl" id="ENSMUST00000099690.4">
    <molecule id="Q3UX83-1"/>
    <property type="protein sequence ID" value="ENSMUSP00000097281.4"/>
    <property type="gene ID" value="ENSMUSG00000075023.13"/>
</dbReference>
<dbReference type="Ensembl" id="ENSMUST00000249087.1">
    <molecule id="Q3UX83-2"/>
    <property type="protein sequence ID" value="ENSMUSP00000159567.1"/>
    <property type="gene ID" value="ENSMUSG00000075023.13"/>
</dbReference>
<dbReference type="GeneID" id="381411"/>
<dbReference type="KEGG" id="mmu:381411"/>
<dbReference type="UCSC" id="uc008lgl.2">
    <molecule id="Q3UX83-1"/>
    <property type="organism name" value="mouse"/>
</dbReference>
<dbReference type="AGR" id="MGI:3584519"/>
<dbReference type="CTD" id="390110"/>
<dbReference type="MGI" id="MGI:3584519">
    <property type="gene designation" value="Accsl"/>
</dbReference>
<dbReference type="VEuPathDB" id="HostDB:ENSMUSG00000075023"/>
<dbReference type="eggNOG" id="KOG0256">
    <property type="taxonomic scope" value="Eukaryota"/>
</dbReference>
<dbReference type="GeneTree" id="ENSGT00940000162841"/>
<dbReference type="HOGENOM" id="CLU_017584_1_3_1"/>
<dbReference type="InParanoid" id="Q3UX83"/>
<dbReference type="OMA" id="HIAQKCL"/>
<dbReference type="OrthoDB" id="691673at2759"/>
<dbReference type="PhylomeDB" id="Q3UX83"/>
<dbReference type="TreeFam" id="TF354218"/>
<dbReference type="BioGRID-ORCS" id="381411">
    <property type="hits" value="3 hits in 76 CRISPR screens"/>
</dbReference>
<dbReference type="ChiTaRS" id="Accsl">
    <property type="organism name" value="mouse"/>
</dbReference>
<dbReference type="PRO" id="PR:Q3UX83"/>
<dbReference type="Proteomes" id="UP000000589">
    <property type="component" value="Chromosome 2"/>
</dbReference>
<dbReference type="RNAct" id="Q3UX83">
    <property type="molecule type" value="protein"/>
</dbReference>
<dbReference type="Bgee" id="ENSMUSG00000075023">
    <property type="expression patterns" value="Expressed in animal zygote and 29 other cell types or tissues"/>
</dbReference>
<dbReference type="ExpressionAtlas" id="Q3UX83">
    <property type="expression patterns" value="baseline and differential"/>
</dbReference>
<dbReference type="GO" id="GO:0030170">
    <property type="term" value="F:pyridoxal phosphate binding"/>
    <property type="evidence" value="ECO:0007669"/>
    <property type="project" value="InterPro"/>
</dbReference>
<dbReference type="GO" id="GO:0009058">
    <property type="term" value="P:biosynthetic process"/>
    <property type="evidence" value="ECO:0007669"/>
    <property type="project" value="InterPro"/>
</dbReference>
<dbReference type="CDD" id="cd00609">
    <property type="entry name" value="AAT_like"/>
    <property type="match status" value="1"/>
</dbReference>
<dbReference type="Gene3D" id="3.90.1150.10">
    <property type="entry name" value="Aspartate Aminotransferase, domain 1"/>
    <property type="match status" value="1"/>
</dbReference>
<dbReference type="Gene3D" id="3.40.640.10">
    <property type="entry name" value="Type I PLP-dependent aspartate aminotransferase-like (Major domain)"/>
    <property type="match status" value="1"/>
</dbReference>
<dbReference type="InterPro" id="IPR004839">
    <property type="entry name" value="Aminotransferase_I/II_large"/>
</dbReference>
<dbReference type="InterPro" id="IPR050478">
    <property type="entry name" value="Ethylene_sulfur-biosynth"/>
</dbReference>
<dbReference type="InterPro" id="IPR015424">
    <property type="entry name" value="PyrdxlP-dep_Trfase"/>
</dbReference>
<dbReference type="InterPro" id="IPR015421">
    <property type="entry name" value="PyrdxlP-dep_Trfase_major"/>
</dbReference>
<dbReference type="InterPro" id="IPR015422">
    <property type="entry name" value="PyrdxlP-dep_Trfase_small"/>
</dbReference>
<dbReference type="PANTHER" id="PTHR43795">
    <property type="entry name" value="BIFUNCTIONAL ASPARTATE AMINOTRANSFERASE AND GLUTAMATE/ASPARTATE-PREPHENATE AMINOTRANSFERASE-RELATED"/>
    <property type="match status" value="1"/>
</dbReference>
<dbReference type="PANTHER" id="PTHR43795:SF1">
    <property type="entry name" value="INACTIVE 1-AMINOCYCLOPROPANE-1-CARBOXYLATE SYNTHASE-LIKE PROTEIN 2-RELATED"/>
    <property type="match status" value="1"/>
</dbReference>
<dbReference type="Pfam" id="PF00155">
    <property type="entry name" value="Aminotran_1_2"/>
    <property type="match status" value="1"/>
</dbReference>
<dbReference type="PRINTS" id="PR00753">
    <property type="entry name" value="ACCSYNTHASE"/>
</dbReference>
<dbReference type="SUPFAM" id="SSF53383">
    <property type="entry name" value="PLP-dependent transferases"/>
    <property type="match status" value="1"/>
</dbReference>
<keyword id="KW-0025">Alternative splicing</keyword>
<keyword id="KW-0663">Pyridoxal phosphate</keyword>
<keyword id="KW-1185">Reference proteome</keyword>
<feature type="chain" id="PRO_0000337058" description="Probable inactive 1-aminocyclopropane-1-carboxylate synthase-like protein 2">
    <location>
        <begin position="1"/>
        <end position="580"/>
    </location>
</feature>
<feature type="region of interest" description="Disordered" evidence="2">
    <location>
        <begin position="1"/>
        <end position="43"/>
    </location>
</feature>
<feature type="compositionally biased region" description="Polar residues" evidence="2">
    <location>
        <begin position="7"/>
        <end position="23"/>
    </location>
</feature>
<feature type="modified residue" description="N6-(pyridoxal phosphate)lysine" evidence="1">
    <location>
        <position position="417"/>
    </location>
</feature>
<feature type="splice variant" id="VSP_033860" description="In isoform 2." evidence="3">
    <location>
        <begin position="1"/>
        <end position="52"/>
    </location>
</feature>
<proteinExistence type="evidence at transcript level"/>